<proteinExistence type="evidence at protein level"/>
<sequence>MQPQRLGPRAGMGPFCLGCSHRKCYSPIRNLISQETFKFHFKNLGYAKGRKDTFLCYEVTRKDCDSPVSLHHGVFKNKDNIHAEICFLYWFHDKVLKVLSPREEFKITWYMSWSPCFECAEQIVRFLATHHNLSLDIFSSRLYNVQDPETQQNLCRLVQEGAQVAAMDLYEFKKCWKKFVDNGGRRFRPWKRLLTNFRYQDSKLQEILRPCYISVPSSSSSTLSNICLTKGLPETRFWVEGRRMDPLSEEEFYSQFYNQRVKHLCYYHRMKPYLCYQLEQFNGQAPLKGCLLSEKGKQHAEILFLDKIRSMELSQVTITCYLTWSPCPNCAWQLAAFKRDRPDLILHIYTSRLYFHWKRPFQKGLCSLWQSGILVDVMDLPQFTDCWTNFVNPKRPFWPWKGLEIISRRTQRRLRRIKESWGLQDLVNDFGNLQLGPPMS</sequence>
<gene>
    <name type="primary">Apobec3</name>
</gene>
<comment type="function">
    <text evidence="6 7 9 10">DNA deaminase (cytidine deaminase) which acts as an inhibitor of retrovirus replication and retrotransposon mobility via deaminase-dependent and -independent mechanisms. Selectively targets single-stranded DNA and does not deaminate double-stranded DNA or single- or double-stranded RNA. Exhibits antiviral activity against HIV-1, simian immunodeficiency viruses (SIVs), mouse mammary tumor virus (MMTV) and friend murine leukemia virus (FrMLV) and may inhibit the mobility of LTR retrotransposons.</text>
</comment>
<comment type="catalytic activity">
    <reaction>
        <text>a 2'-deoxycytidine in single-stranded DNA + H2O + H(+) = a 2'-deoxyuridine in single-stranded DNA + NH4(+)</text>
        <dbReference type="Rhea" id="RHEA:50948"/>
        <dbReference type="Rhea" id="RHEA-COMP:12846"/>
        <dbReference type="Rhea" id="RHEA-COMP:12847"/>
        <dbReference type="ChEBI" id="CHEBI:15377"/>
        <dbReference type="ChEBI" id="CHEBI:15378"/>
        <dbReference type="ChEBI" id="CHEBI:28938"/>
        <dbReference type="ChEBI" id="CHEBI:85452"/>
        <dbReference type="ChEBI" id="CHEBI:133902"/>
        <dbReference type="EC" id="3.5.4.38"/>
    </reaction>
</comment>
<comment type="cofactor">
    <cofactor evidence="1">
        <name>Zn(2+)</name>
        <dbReference type="ChEBI" id="CHEBI:29105"/>
    </cofactor>
</comment>
<comment type="subunit">
    <text evidence="8 9">Homodimer. Interacts with mouse mammary tumor virus (MMTV) nucleocapsid protein p14.</text>
</comment>
<comment type="subcellular location">
    <subcellularLocation>
        <location evidence="7">Cytoplasm</location>
    </subcellularLocation>
</comment>
<comment type="alternative products">
    <event type="alternative splicing"/>
    <isoform>
        <id>Q99J72-1</id>
        <name>1</name>
        <sequence type="displayed"/>
    </isoform>
    <isoform>
        <id>Q99J72-2</id>
        <name>2</name>
        <sequence type="described" ref="VSP_009832"/>
    </isoform>
    <isoform>
        <id>Q99J72-3</id>
        <name>3</name>
        <sequence type="described" ref="VSP_009831 VSP_009833"/>
    </isoform>
    <isoform>
        <id>Q99J72-4</id>
        <name>4</name>
        <sequence type="described" ref="VSP_009831"/>
    </isoform>
</comment>
<comment type="tissue specificity">
    <text evidence="3">Expressed in spleen, node and lung.</text>
</comment>
<comment type="domain">
    <text evidence="8">The CMP/dCMP deaminase domain 1 confers deoxycytidine deaminase activity, whereas the CMP/dCMP deaminase domain 2 mediates RNA-dependent oligomerization and virion incorporation.</text>
</comment>
<comment type="miscellaneous">
    <text>Probable human APOBEC3G ortholog.</text>
</comment>
<comment type="miscellaneous">
    <molecule>Isoform 4</molecule>
    <text evidence="12">Lacks exon V. Found in cell line MDTF.</text>
</comment>
<comment type="similarity">
    <text evidence="12">Belongs to the cytidine and deoxycytidylate deaminase family.</text>
</comment>
<comment type="sequence caution" evidence="12">
    <conflict type="erroneous initiation">
        <sequence resource="EMBL-CDS" id="AAH03314"/>
    </conflict>
    <text>Truncated N-terminus.</text>
</comment>
<comment type="sequence caution" evidence="12">
    <conflict type="erroneous initiation">
        <sequence resource="EMBL-CDS" id="BAC31901"/>
    </conflict>
    <text>Truncated N-terminus.</text>
</comment>
<comment type="sequence caution" evidence="12">
    <conflict type="erroneous initiation">
        <sequence resource="EMBL-CDS" id="BAC34023"/>
    </conflict>
    <text>Truncated N-terminus.</text>
</comment>
<name>ABEC3_MOUSE</name>
<feature type="chain" id="PRO_0000171772" description="DNA dC-&gt;dU-editing enzyme APOBEC-3">
    <location>
        <begin position="1"/>
        <end position="440"/>
    </location>
</feature>
<feature type="domain" description="CMP/dCMP-type deaminase 1" evidence="2">
    <location>
        <begin position="49"/>
        <end position="165"/>
    </location>
</feature>
<feature type="domain" description="CMP/dCMP-type deaminase 2" evidence="2">
    <location>
        <begin position="249"/>
        <end position="368"/>
    </location>
</feature>
<feature type="active site" description="Proton donor" evidence="1">
    <location>
        <position position="84"/>
    </location>
</feature>
<feature type="binding site" evidence="1">
    <location>
        <position position="82"/>
    </location>
    <ligand>
        <name>Zn(2+)</name>
        <dbReference type="ChEBI" id="CHEBI:29105"/>
    </ligand>
</feature>
<feature type="binding site" evidence="1">
    <location>
        <position position="116"/>
    </location>
    <ligand>
        <name>Zn(2+)</name>
        <dbReference type="ChEBI" id="CHEBI:29105"/>
    </ligand>
</feature>
<feature type="binding site" evidence="1">
    <location>
        <position position="119"/>
    </location>
    <ligand>
        <name>Zn(2+)</name>
        <dbReference type="ChEBI" id="CHEBI:29105"/>
    </ligand>
</feature>
<feature type="binding site" evidence="1">
    <location>
        <position position="299"/>
    </location>
    <ligand>
        <name>Zn(2+)</name>
        <dbReference type="ChEBI" id="CHEBI:29105"/>
    </ligand>
</feature>
<feature type="binding site" evidence="1">
    <location>
        <position position="327"/>
    </location>
    <ligand>
        <name>Zn(2+)</name>
        <dbReference type="ChEBI" id="CHEBI:29105"/>
    </ligand>
</feature>
<feature type="binding site" evidence="1">
    <location>
        <position position="330"/>
    </location>
    <ligand>
        <name>Zn(2+)</name>
        <dbReference type="ChEBI" id="CHEBI:29105"/>
    </ligand>
</feature>
<feature type="splice variant" id="VSP_009831" description="In isoform 3 and isoform 4." evidence="11">
    <location>
        <begin position="209"/>
        <end position="241"/>
    </location>
</feature>
<feature type="splice variant" id="VSP_009832" description="In isoform 2." evidence="11">
    <original>SWGLQDLVNDFGNLQLGPPMS</original>
    <variation>VRTTLLQGPAS</variation>
    <location>
        <begin position="420"/>
        <end position="440"/>
    </location>
</feature>
<feature type="splice variant" id="VSP_009833" description="In isoform 3." evidence="11">
    <original>SWGLQDLVNDFGNLQLGPPMS</original>
    <variation>SRSHAS</variation>
    <location>
        <begin position="420"/>
        <end position="440"/>
    </location>
</feature>
<feature type="sequence variant" description="In cell line MDTF.">
    <original>L</original>
    <variation>V</variation>
    <location>
        <position position="31"/>
    </location>
</feature>
<feature type="sequence variant" description="In cell line MDTF.">
    <original>K</original>
    <variation>E</variation>
    <location>
        <position position="42"/>
    </location>
</feature>
<feature type="sequence variant" description="In cell line MDTF.">
    <original>GY</original>
    <variation>PF</variation>
    <location>
        <begin position="45"/>
        <end position="46"/>
    </location>
</feature>
<feature type="sequence variant" description="In cell lines L1.2 and 3T3." evidence="4 5">
    <original>G</original>
    <variation>R</variation>
    <location>
        <position position="45"/>
    </location>
</feature>
<feature type="sequence variant" description="In cell lines L1.2 and 3T3." evidence="4 5">
    <original>KG</original>
    <variation>ID</variation>
    <location>
        <begin position="48"/>
        <end position="49"/>
    </location>
</feature>
<feature type="sequence variant" description="In cell line MDTF; requires 2 nucleotide substitutions.">
    <original>G</original>
    <variation>K</variation>
    <location>
        <position position="49"/>
    </location>
</feature>
<feature type="sequence variant" description="In cell line L1.2.">
    <original>Q</original>
    <variation>R</variation>
    <location>
        <position position="122"/>
    </location>
</feature>
<feature type="sequence variant" description="In cell lines L1.2 and 3T3." evidence="4 5">
    <original>IV</original>
    <variation>VL</variation>
    <location>
        <begin position="123"/>
        <end position="124"/>
    </location>
</feature>
<feature type="sequence variant" description="In cell line MDTF.">
    <original>I</original>
    <variation>V</variation>
    <location>
        <position position="123"/>
    </location>
</feature>
<feature type="sequence variant" description="In cell line MDTF.">
    <original>S</original>
    <variation>F</variation>
    <location>
        <position position="139"/>
    </location>
</feature>
<feature type="sequence variant" description="In cell line MDTF.">
    <original>VQDPET</original>
    <variation>IRNPEN</variation>
    <location>
        <begin position="145"/>
        <end position="150"/>
    </location>
</feature>
<feature type="sequence variant" description="In cell lines L1.2 and 3T3." evidence="4 5">
    <original>VQ</original>
    <variation>IR</variation>
    <location>
        <begin position="145"/>
        <end position="146"/>
    </location>
</feature>
<feature type="sequence variant" description="In cell line 3T3.">
    <original>TQ</original>
    <variation>NQL</variation>
    <location>
        <begin position="150"/>
        <end position="151"/>
    </location>
</feature>
<feature type="sequence variant" description="In cell line L1.2." evidence="4 5">
    <original>T</original>
    <variation>N</variation>
    <location>
        <position position="150"/>
    </location>
</feature>
<feature type="sequence variant" description="In cell line MDTF.">
    <original>Q</original>
    <variation>L</variation>
    <location>
        <position position="159"/>
    </location>
</feature>
<feature type="sequence variant" description="In cell line MDTF.">
    <original>KK</original>
    <variation>EE</variation>
    <location>
        <begin position="173"/>
        <end position="174"/>
    </location>
</feature>
<feature type="sequence variant" description="In cell lines L1.2 and 3T3." evidence="4 5">
    <original>R</original>
    <variation>K</variation>
    <location>
        <position position="192"/>
    </location>
</feature>
<feature type="sequence variant" description="In cell line 3T3.">
    <original>GRRMDP</original>
    <variation>RRRVHL</variation>
    <location>
        <begin position="241"/>
        <end position="246"/>
    </location>
</feature>
<feature type="sequence variant" evidence="4 5">
    <original>MDP</original>
    <variation>VHL</variation>
    <location>
        <begin position="244"/>
        <end position="246"/>
    </location>
</feature>
<feature type="sequence variant" description="In cell line MDTF.">
    <original>DP</original>
    <variation>SL</variation>
    <location>
        <begin position="245"/>
        <end position="246"/>
    </location>
</feature>
<feature type="sequence variant" description="In cell line MDTF.">
    <original>Q</original>
    <variation>L</variation>
    <location>
        <position position="259"/>
    </location>
</feature>
<feature type="sequence variant" description="In cell line 3T3.">
    <original>RM</original>
    <variation>GV</variation>
    <location>
        <begin position="269"/>
        <end position="270"/>
    </location>
</feature>
<feature type="sequence variant" description="In cell line L1.2." evidence="4 5">
    <original>R</original>
    <variation>G</variation>
    <location>
        <position position="269"/>
    </location>
</feature>
<feature type="sequence variant" description="In cell line MDTF.">
    <original>C</original>
    <variation>F</variation>
    <location>
        <position position="275"/>
    </location>
</feature>
<feature type="sequence variant" description="In cell line MDTF; requires 2 nucleotide substitutions.">
    <original>Q</original>
    <variation>W</variation>
    <location>
        <position position="280"/>
    </location>
</feature>
<feature type="sequence variant" description="In cell line MDTF.">
    <original>A</original>
    <variation>E</variation>
    <location>
        <position position="285"/>
    </location>
</feature>
<feature type="sequence variant" description="In cell line MDTF.">
    <location>
        <begin position="295"/>
        <end position="307"/>
    </location>
</feature>
<feature type="sequence variant" description="In cell lines L1.2 and 3T3." evidence="4 5">
    <original>T</original>
    <variation>I</variation>
    <location>
        <position position="317"/>
    </location>
</feature>
<feature type="sequence variant" description="In cell line EL4.">
    <original>S</original>
    <variation>G</variation>
    <location>
        <position position="325"/>
    </location>
</feature>
<feature type="sequence variant" description="In cell line MDTF.">
    <original>R</original>
    <variation>K</variation>
    <location>
        <position position="339"/>
    </location>
</feature>
<feature type="sequence variant" description="In cell line MDTF.">
    <original>N</original>
    <variation>S</variation>
    <location>
        <position position="392"/>
    </location>
</feature>
<feature type="sequence variant" description="In splenocytes.">
    <original>W</original>
    <variation>R</variation>
    <location>
        <position position="398"/>
    </location>
</feature>
<feature type="sequence variant" description="In cell line MDTF.">
    <original>II</original>
    <variation>KT</variation>
    <location>
        <begin position="405"/>
        <end position="406"/>
    </location>
</feature>
<feature type="sequence variant" description="In cell line L1.2.">
    <original>T</original>
    <variation>A</variation>
    <location>
        <position position="410"/>
    </location>
</feature>
<feature type="sequence variant" description="In cell lines MDTF and 3T3.">
    <original>R</original>
    <variation>C</variation>
    <location>
        <position position="415"/>
    </location>
</feature>
<feature type="sequence variant" description="In cell line L1.2." evidence="4 5">
    <original>R</original>
    <variation>H</variation>
    <location>
        <position position="415"/>
    </location>
</feature>
<feature type="mutagenesis site" description="Decrease in cytidine deaminase and antiviral activity." evidence="8">
    <original>E</original>
    <variation>A</variation>
    <location>
        <position position="84"/>
    </location>
</feature>
<feature type="mutagenesis site" description="Decrease in cytidine deaminase and antiviral activity; when associated with A-301." evidence="8">
    <original>E</original>
    <variation>A</variation>
    <location>
        <position position="84"/>
    </location>
</feature>
<feature type="mutagenesis site" description="Decrease in cytidine deaminase and antiviral activity; when associated with A-84." evidence="8">
    <original>E</original>
    <variation>A</variation>
    <location>
        <position position="301"/>
    </location>
</feature>
<feature type="mutagenesis site" description="No effect on cytidine deaminase and antiviral activity." evidence="8">
    <original>E</original>
    <variation>A</variation>
    <location>
        <position position="301"/>
    </location>
</feature>
<feature type="sequence conflict" description="In Ref. 1; BAC31901 and 4; AAH03314." evidence="12" ref="1 4">
    <original>L</original>
    <variation>M</variation>
    <location>
        <position position="6"/>
    </location>
</feature>
<feature type="sequence conflict" description="In Ref. 1; BAC31901 and 4; AAH03314." evidence="12" ref="1 4">
    <original>S</original>
    <variation>P</variation>
    <location>
        <position position="214"/>
    </location>
</feature>
<feature type="sequence conflict" description="In Ref. 1; BAC31901 and 4; AAH03314." evidence="12" ref="1 4">
    <original>W</original>
    <variation>C</variation>
    <location>
        <position position="238"/>
    </location>
</feature>
<feature type="sequence conflict" description="In Ref. 2; no nucleotide entry." evidence="12" ref="2">
    <original>G</original>
    <variation>R</variation>
    <location>
        <position position="241"/>
    </location>
</feature>
<accession>Q99J72</accession>
<accession>H3BJL0</accession>
<accession>Q8C7L0</accession>
<accession>Q8C8V7</accession>
<organism>
    <name type="scientific">Mus musculus</name>
    <name type="common">Mouse</name>
    <dbReference type="NCBI Taxonomy" id="10090"/>
    <lineage>
        <taxon>Eukaryota</taxon>
        <taxon>Metazoa</taxon>
        <taxon>Chordata</taxon>
        <taxon>Craniata</taxon>
        <taxon>Vertebrata</taxon>
        <taxon>Euteleostomi</taxon>
        <taxon>Mammalia</taxon>
        <taxon>Eutheria</taxon>
        <taxon>Euarchontoglires</taxon>
        <taxon>Glires</taxon>
        <taxon>Rodentia</taxon>
        <taxon>Myomorpha</taxon>
        <taxon>Muroidea</taxon>
        <taxon>Muridae</taxon>
        <taxon>Murinae</taxon>
        <taxon>Mus</taxon>
        <taxon>Mus</taxon>
    </lineage>
</organism>
<protein>
    <recommendedName>
        <fullName>DNA dC-&gt;dU-editing enzyme APOBEC-3</fullName>
        <ecNumber>3.5.4.38</ecNumber>
    </recommendedName>
    <alternativeName>
        <fullName>Apolipoprotein B mRNA-editing complex 3</fullName>
        <shortName>Arp3</shortName>
    </alternativeName>
    <alternativeName>
        <fullName>CEM-15</fullName>
        <shortName>CEM15</shortName>
    </alternativeName>
</protein>
<keyword id="KW-0025">Alternative splicing</keyword>
<keyword id="KW-0051">Antiviral defense</keyword>
<keyword id="KW-0963">Cytoplasm</keyword>
<keyword id="KW-0378">Hydrolase</keyword>
<keyword id="KW-0391">Immunity</keyword>
<keyword id="KW-0399">Innate immunity</keyword>
<keyword id="KW-0479">Metal-binding</keyword>
<keyword id="KW-1185">Reference proteome</keyword>
<keyword id="KW-0677">Repeat</keyword>
<keyword id="KW-0862">Zinc</keyword>
<reference key="1">
    <citation type="journal article" date="2005" name="Science">
        <title>The transcriptional landscape of the mammalian genome.</title>
        <authorList>
            <person name="Carninci P."/>
            <person name="Kasukawa T."/>
            <person name="Katayama S."/>
            <person name="Gough J."/>
            <person name="Frith M.C."/>
            <person name="Maeda N."/>
            <person name="Oyama R."/>
            <person name="Ravasi T."/>
            <person name="Lenhard B."/>
            <person name="Wells C."/>
            <person name="Kodzius R."/>
            <person name="Shimokawa K."/>
            <person name="Bajic V.B."/>
            <person name="Brenner S.E."/>
            <person name="Batalov S."/>
            <person name="Forrest A.R."/>
            <person name="Zavolan M."/>
            <person name="Davis M.J."/>
            <person name="Wilming L.G."/>
            <person name="Aidinis V."/>
            <person name="Allen J.E."/>
            <person name="Ambesi-Impiombato A."/>
            <person name="Apweiler R."/>
            <person name="Aturaliya R.N."/>
            <person name="Bailey T.L."/>
            <person name="Bansal M."/>
            <person name="Baxter L."/>
            <person name="Beisel K.W."/>
            <person name="Bersano T."/>
            <person name="Bono H."/>
            <person name="Chalk A.M."/>
            <person name="Chiu K.P."/>
            <person name="Choudhary V."/>
            <person name="Christoffels A."/>
            <person name="Clutterbuck D.R."/>
            <person name="Crowe M.L."/>
            <person name="Dalla E."/>
            <person name="Dalrymple B.P."/>
            <person name="de Bono B."/>
            <person name="Della Gatta G."/>
            <person name="di Bernardo D."/>
            <person name="Down T."/>
            <person name="Engstrom P."/>
            <person name="Fagiolini M."/>
            <person name="Faulkner G."/>
            <person name="Fletcher C.F."/>
            <person name="Fukushima T."/>
            <person name="Furuno M."/>
            <person name="Futaki S."/>
            <person name="Gariboldi M."/>
            <person name="Georgii-Hemming P."/>
            <person name="Gingeras T.R."/>
            <person name="Gojobori T."/>
            <person name="Green R.E."/>
            <person name="Gustincich S."/>
            <person name="Harbers M."/>
            <person name="Hayashi Y."/>
            <person name="Hensch T.K."/>
            <person name="Hirokawa N."/>
            <person name="Hill D."/>
            <person name="Huminiecki L."/>
            <person name="Iacono M."/>
            <person name="Ikeo K."/>
            <person name="Iwama A."/>
            <person name="Ishikawa T."/>
            <person name="Jakt M."/>
            <person name="Kanapin A."/>
            <person name="Katoh M."/>
            <person name="Kawasawa Y."/>
            <person name="Kelso J."/>
            <person name="Kitamura H."/>
            <person name="Kitano H."/>
            <person name="Kollias G."/>
            <person name="Krishnan S.P."/>
            <person name="Kruger A."/>
            <person name="Kummerfeld S.K."/>
            <person name="Kurochkin I.V."/>
            <person name="Lareau L.F."/>
            <person name="Lazarevic D."/>
            <person name="Lipovich L."/>
            <person name="Liu J."/>
            <person name="Liuni S."/>
            <person name="McWilliam S."/>
            <person name="Madan Babu M."/>
            <person name="Madera M."/>
            <person name="Marchionni L."/>
            <person name="Matsuda H."/>
            <person name="Matsuzawa S."/>
            <person name="Miki H."/>
            <person name="Mignone F."/>
            <person name="Miyake S."/>
            <person name="Morris K."/>
            <person name="Mottagui-Tabar S."/>
            <person name="Mulder N."/>
            <person name="Nakano N."/>
            <person name="Nakauchi H."/>
            <person name="Ng P."/>
            <person name="Nilsson R."/>
            <person name="Nishiguchi S."/>
            <person name="Nishikawa S."/>
            <person name="Nori F."/>
            <person name="Ohara O."/>
            <person name="Okazaki Y."/>
            <person name="Orlando V."/>
            <person name="Pang K.C."/>
            <person name="Pavan W.J."/>
            <person name="Pavesi G."/>
            <person name="Pesole G."/>
            <person name="Petrovsky N."/>
            <person name="Piazza S."/>
            <person name="Reed J."/>
            <person name="Reid J.F."/>
            <person name="Ring B.Z."/>
            <person name="Ringwald M."/>
            <person name="Rost B."/>
            <person name="Ruan Y."/>
            <person name="Salzberg S.L."/>
            <person name="Sandelin A."/>
            <person name="Schneider C."/>
            <person name="Schoenbach C."/>
            <person name="Sekiguchi K."/>
            <person name="Semple C.A."/>
            <person name="Seno S."/>
            <person name="Sessa L."/>
            <person name="Sheng Y."/>
            <person name="Shibata Y."/>
            <person name="Shimada H."/>
            <person name="Shimada K."/>
            <person name="Silva D."/>
            <person name="Sinclair B."/>
            <person name="Sperling S."/>
            <person name="Stupka E."/>
            <person name="Sugiura K."/>
            <person name="Sultana R."/>
            <person name="Takenaka Y."/>
            <person name="Taki K."/>
            <person name="Tammoja K."/>
            <person name="Tan S.L."/>
            <person name="Tang S."/>
            <person name="Taylor M.S."/>
            <person name="Tegner J."/>
            <person name="Teichmann S.A."/>
            <person name="Ueda H.R."/>
            <person name="van Nimwegen E."/>
            <person name="Verardo R."/>
            <person name="Wei C.L."/>
            <person name="Yagi K."/>
            <person name="Yamanishi H."/>
            <person name="Zabarovsky E."/>
            <person name="Zhu S."/>
            <person name="Zimmer A."/>
            <person name="Hide W."/>
            <person name="Bult C."/>
            <person name="Grimmond S.M."/>
            <person name="Teasdale R.D."/>
            <person name="Liu E.T."/>
            <person name="Brusic V."/>
            <person name="Quackenbush J."/>
            <person name="Wahlestedt C."/>
            <person name="Mattick J.S."/>
            <person name="Hume D.A."/>
            <person name="Kai C."/>
            <person name="Sasaki D."/>
            <person name="Tomaru Y."/>
            <person name="Fukuda S."/>
            <person name="Kanamori-Katayama M."/>
            <person name="Suzuki M."/>
            <person name="Aoki J."/>
            <person name="Arakawa T."/>
            <person name="Iida J."/>
            <person name="Imamura K."/>
            <person name="Itoh M."/>
            <person name="Kato T."/>
            <person name="Kawaji H."/>
            <person name="Kawagashira N."/>
            <person name="Kawashima T."/>
            <person name="Kojima M."/>
            <person name="Kondo S."/>
            <person name="Konno H."/>
            <person name="Nakano K."/>
            <person name="Ninomiya N."/>
            <person name="Nishio T."/>
            <person name="Okada M."/>
            <person name="Plessy C."/>
            <person name="Shibata K."/>
            <person name="Shiraki T."/>
            <person name="Suzuki S."/>
            <person name="Tagami M."/>
            <person name="Waki K."/>
            <person name="Watahiki A."/>
            <person name="Okamura-Oho Y."/>
            <person name="Suzuki H."/>
            <person name="Kawai J."/>
            <person name="Hayashizaki Y."/>
        </authorList>
    </citation>
    <scope>NUCLEOTIDE SEQUENCE [LARGE SCALE MRNA] (ISOFORMS 2 AND 3)</scope>
    <scope>VARIANTS ARG-45; 48-LYS-GLY-49 DELINS ILE-ASP; 123-ILE-VAL-124 DELINS VAL-LEU; 145-VAL-GLN-146 DELINS ILE-ARG; ASN-150; LYS-192; 244-MET--PRO-246 DELINS VAL-HIS-LEU; GLY-269; ILE-317 AND HIS-415</scope>
    <source>
        <strain>C57BL/6J</strain>
        <tissue>Hippocampus</tissue>
        <tissue>Retina</tissue>
    </source>
</reference>
<reference key="2">
    <citation type="submission" date="2004-02" db="UniProtKB">
        <authorList>
            <person name="Mariani R."/>
            <person name="Landau N.R."/>
        </authorList>
    </citation>
    <scope>NUCLEOTIDE SEQUENCE (ISOFORM 4)</scope>
    <scope>VARIANTS</scope>
    <source>
        <strain>C57BL/6J</strain>
        <tissue>Spleen</tissue>
    </source>
</reference>
<reference key="3">
    <citation type="journal article" date="2009" name="PLoS Biol.">
        <title>Lineage-specific biology revealed by a finished genome assembly of the mouse.</title>
        <authorList>
            <person name="Church D.M."/>
            <person name="Goodstadt L."/>
            <person name="Hillier L.W."/>
            <person name="Zody M.C."/>
            <person name="Goldstein S."/>
            <person name="She X."/>
            <person name="Bult C.J."/>
            <person name="Agarwala R."/>
            <person name="Cherry J.L."/>
            <person name="DiCuccio M."/>
            <person name="Hlavina W."/>
            <person name="Kapustin Y."/>
            <person name="Meric P."/>
            <person name="Maglott D."/>
            <person name="Birtle Z."/>
            <person name="Marques A.C."/>
            <person name="Graves T."/>
            <person name="Zhou S."/>
            <person name="Teague B."/>
            <person name="Potamousis K."/>
            <person name="Churas C."/>
            <person name="Place M."/>
            <person name="Herschleb J."/>
            <person name="Runnheim R."/>
            <person name="Forrest D."/>
            <person name="Amos-Landgraf J."/>
            <person name="Schwartz D.C."/>
            <person name="Cheng Z."/>
            <person name="Lindblad-Toh K."/>
            <person name="Eichler E.E."/>
            <person name="Ponting C.P."/>
        </authorList>
    </citation>
    <scope>NUCLEOTIDE SEQUENCE [LARGE SCALE GENOMIC DNA]</scope>
    <source>
        <strain>C57BL/6J</strain>
    </source>
</reference>
<reference key="4">
    <citation type="journal article" date="2004" name="Genome Res.">
        <title>The status, quality, and expansion of the NIH full-length cDNA project: the Mammalian Gene Collection (MGC).</title>
        <authorList>
            <consortium name="The MGC Project Team"/>
        </authorList>
    </citation>
    <scope>NUCLEOTIDE SEQUENCE [LARGE SCALE MRNA] (ISOFORM 1)</scope>
    <scope>VARIANTS ARG-45; 48-LYS-GLY-49 DELINS ILE-ASP; 123-ILE-VAL-124 DELINS VAL-LEU; 145-VAL-GLN-146 DELINS ILE-ARG; ASN-150; LYS-192; 244-MET--PRO-246 DELINS VAL-HIS-LEU; GLY-269; ILE-317 AND HIS-415</scope>
    <source>
        <tissue>Mammary tumor</tissue>
    </source>
</reference>
<reference key="5">
    <citation type="journal article" date="2003" name="Cell">
        <title>Species-specific exclusion of APOBEC3G from HIV-1 virions by Vif.</title>
        <authorList>
            <person name="Mariani R."/>
            <person name="Chen D."/>
            <person name="Schroefelbauer B."/>
            <person name="Navarro F."/>
            <person name="Koenig R."/>
            <person name="Bollman B."/>
            <person name="Muenk C."/>
            <person name="Nymark-McMahon H."/>
            <person name="Landau N.R."/>
        </authorList>
    </citation>
    <scope>DNA C TO U EDITING ACTIVITY</scope>
    <scope>TISSUE SPECIFICITY</scope>
</reference>
<reference key="6">
    <citation type="journal article" date="2006" name="Curr. Biol.">
        <title>APOBEC3A is a potent inhibitor of adeno-associated virus and retrotransposons.</title>
        <authorList>
            <person name="Chen H."/>
            <person name="Lilley C.E."/>
            <person name="Yu Q."/>
            <person name="Lee D.V."/>
            <person name="Chou J."/>
            <person name="Narvaiza I."/>
            <person name="Landau N.R."/>
            <person name="Weitzman M.D."/>
        </authorList>
    </citation>
    <scope>FUNCTION IN RETROTRANSPOSITION</scope>
    <scope>SUBCELLULAR LOCATION</scope>
</reference>
<reference key="7">
    <citation type="journal article" date="2006" name="J. Biol. Chem.">
        <title>Reversed functional organization of mouse and human APOBEC3 cytidine deaminase domains.</title>
        <authorList>
            <person name="Hakata Y."/>
            <person name="Landau N.R."/>
        </authorList>
    </citation>
    <scope>DOMAIN CMP/DCMP DEAMINASE</scope>
    <scope>SUBUNIT</scope>
    <scope>MUTAGENESIS OF GLU-84 AND GLU-301</scope>
</reference>
<reference key="8">
    <citation type="journal article" date="2006" name="J. Virol.">
        <title>Restriction of foamy viruses by APOBEC cytidine deaminases.</title>
        <authorList>
            <person name="Delebecque F."/>
            <person name="Suspene R."/>
            <person name="Calattini S."/>
            <person name="Casartelli N."/>
            <person name="Saib A."/>
            <person name="Froment A."/>
            <person name="Wain-Hobson S."/>
            <person name="Gessain A."/>
            <person name="Vartanian J.P."/>
            <person name="Schwartz O."/>
        </authorList>
    </citation>
    <scope>FUNCTION IN SFV RESTRICTION</scope>
</reference>
<reference key="9">
    <citation type="journal article" date="2007" name="Nature">
        <title>APOBEC3 inhibits mouse mammary tumour virus replication in vivo.</title>
        <authorList>
            <person name="Okeoma C.M."/>
            <person name="Lovsin N."/>
            <person name="Peterlin B.M."/>
            <person name="Ross S.R."/>
        </authorList>
    </citation>
    <scope>FUNCTION IN MMTV RESTRICTION</scope>
    <scope>INTERACTION WITH MMTV NUCLEOCAPSID PROTEIN P14</scope>
</reference>
<reference key="10">
    <citation type="journal article" date="2008" name="Annu. Rev. Immunol.">
        <title>The APOBEC3 cytidine deaminases: an innate defensive network opposing exogenous retroviruses and endogenous retroelements.</title>
        <authorList>
            <person name="Chiu Y.L."/>
            <person name="Greene W.C."/>
        </authorList>
    </citation>
    <scope>REVIEW</scope>
</reference>
<reference key="11">
    <citation type="journal article" date="2008" name="J. Virol.">
        <title>Mouse APOBEC3 restricts friend leukemia virus infection and pathogenesis in vivo.</title>
        <authorList>
            <person name="Takeda E."/>
            <person name="Tsuji-Kawahara S."/>
            <person name="Sakamoto M."/>
            <person name="Langlois M.A."/>
            <person name="Neuberger M.S."/>
            <person name="Rada C."/>
            <person name="Miyazawa M."/>
        </authorList>
    </citation>
    <scope>FUNCTION IN FRMLV RESTRICTION</scope>
</reference>
<evidence type="ECO:0000250" key="1"/>
<evidence type="ECO:0000255" key="2">
    <source>
        <dbReference type="PROSITE-ProRule" id="PRU01083"/>
    </source>
</evidence>
<evidence type="ECO:0000269" key="3">
    <source>
    </source>
</evidence>
<evidence type="ECO:0000269" key="4">
    <source>
    </source>
</evidence>
<evidence type="ECO:0000269" key="5">
    <source>
    </source>
</evidence>
<evidence type="ECO:0000269" key="6">
    <source>
    </source>
</evidence>
<evidence type="ECO:0000269" key="7">
    <source>
    </source>
</evidence>
<evidence type="ECO:0000269" key="8">
    <source>
    </source>
</evidence>
<evidence type="ECO:0000269" key="9">
    <source>
    </source>
</evidence>
<evidence type="ECO:0000269" key="10">
    <source>
    </source>
</evidence>
<evidence type="ECO:0000303" key="11">
    <source>
    </source>
</evidence>
<evidence type="ECO:0000305" key="12"/>
<dbReference type="EC" id="3.5.4.38"/>
<dbReference type="EMBL" id="AK044394">
    <property type="protein sequence ID" value="BAC31901.1"/>
    <property type="status" value="ALT_INIT"/>
    <property type="molecule type" value="mRNA"/>
</dbReference>
<dbReference type="EMBL" id="AK049998">
    <property type="protein sequence ID" value="BAC34023.1"/>
    <property type="status" value="ALT_INIT"/>
    <property type="molecule type" value="mRNA"/>
</dbReference>
<dbReference type="EMBL" id="AC113595">
    <property type="status" value="NOT_ANNOTATED_CDS"/>
    <property type="molecule type" value="Genomic_DNA"/>
</dbReference>
<dbReference type="EMBL" id="BC003314">
    <property type="protein sequence ID" value="AAH03314.1"/>
    <property type="status" value="ALT_INIT"/>
    <property type="molecule type" value="mRNA"/>
</dbReference>
<dbReference type="RefSeq" id="XP_017172295.1">
    <molecule id="Q99J72-3"/>
    <property type="nucleotide sequence ID" value="XM_017316806.3"/>
</dbReference>
<dbReference type="SMR" id="Q99J72"/>
<dbReference type="FunCoup" id="Q99J72">
    <property type="interactions" value="169"/>
</dbReference>
<dbReference type="STRING" id="10090.ENSMUSP00000105249"/>
<dbReference type="GlyGen" id="Q99J72">
    <property type="glycosylation" value="1 site, 1 O-linked glycan (1 site)"/>
</dbReference>
<dbReference type="iPTMnet" id="Q99J72"/>
<dbReference type="PhosphoSitePlus" id="Q99J72"/>
<dbReference type="jPOST" id="Q99J72"/>
<dbReference type="PaxDb" id="10090-ENSMUSP00000135027"/>
<dbReference type="ProteomicsDB" id="286048">
    <molecule id="Q99J72-1"/>
</dbReference>
<dbReference type="ProteomicsDB" id="286049">
    <molecule id="Q99J72-2"/>
</dbReference>
<dbReference type="ProteomicsDB" id="286050">
    <molecule id="Q99J72-3"/>
</dbReference>
<dbReference type="ProteomicsDB" id="286051">
    <molecule id="Q99J72-4"/>
</dbReference>
<dbReference type="Pumba" id="Q99J72"/>
<dbReference type="Antibodypedia" id="26556">
    <property type="antibodies" value="48 antibodies from 18 providers"/>
</dbReference>
<dbReference type="DNASU" id="80287"/>
<dbReference type="Ensembl" id="ENSMUST00000175714.8">
    <molecule id="Q99J72-1"/>
    <property type="protein sequence ID" value="ENSMUSP00000135027.2"/>
    <property type="gene ID" value="ENSMUSG00000009585.19"/>
</dbReference>
<dbReference type="Ensembl" id="ENSMUST00000175752.8">
    <molecule id="Q99J72-4"/>
    <property type="protein sequence ID" value="ENSMUSP00000135358.2"/>
    <property type="gene ID" value="ENSMUSG00000009585.19"/>
</dbReference>
<dbReference type="Ensembl" id="ENSMUST00000176325.8">
    <molecule id="Q99J72-2"/>
    <property type="protein sequence ID" value="ENSMUSP00000134838.2"/>
    <property type="gene ID" value="ENSMUSG00000009585.19"/>
</dbReference>
<dbReference type="Ensembl" id="ENSMUST00000177098.8">
    <molecule id="Q99J72-3"/>
    <property type="protein sequence ID" value="ENSMUSP00000135079.2"/>
    <property type="gene ID" value="ENSMUSG00000009585.19"/>
</dbReference>
<dbReference type="GeneID" id="80287"/>
<dbReference type="AGR" id="MGI:1933111"/>
<dbReference type="CTD" id="80287"/>
<dbReference type="MGI" id="MGI:1933111">
    <property type="gene designation" value="Apobec3"/>
</dbReference>
<dbReference type="VEuPathDB" id="HostDB:ENSMUSG00000009585"/>
<dbReference type="eggNOG" id="KOG4075">
    <property type="taxonomic scope" value="Eukaryota"/>
</dbReference>
<dbReference type="GeneTree" id="ENSGT00940000162772"/>
<dbReference type="InParanoid" id="Q99J72"/>
<dbReference type="OMA" id="FLCNQAP"/>
<dbReference type="OrthoDB" id="9445293at2759"/>
<dbReference type="PhylomeDB" id="Q99J72"/>
<dbReference type="TreeFam" id="TF331356"/>
<dbReference type="BRENDA" id="3.5.4.1">
    <property type="organism ID" value="3474"/>
</dbReference>
<dbReference type="Reactome" id="R-MMU-72200">
    <property type="pathway name" value="mRNA Editing: C to U Conversion"/>
</dbReference>
<dbReference type="Reactome" id="R-MMU-75094">
    <property type="pathway name" value="Formation of the Editosome"/>
</dbReference>
<dbReference type="ChiTaRS" id="Apobec3">
    <property type="organism name" value="mouse"/>
</dbReference>
<dbReference type="PRO" id="PR:Q99J72"/>
<dbReference type="Proteomes" id="UP000000589">
    <property type="component" value="Chromosome 15"/>
</dbReference>
<dbReference type="RNAct" id="Q99J72">
    <property type="molecule type" value="protein"/>
</dbReference>
<dbReference type="Bgee" id="ENSMUSG00000009585">
    <property type="expression patterns" value="Expressed in mesenteric lymph node and 184 other cell types or tissues"/>
</dbReference>
<dbReference type="ExpressionAtlas" id="Q99J72">
    <property type="expression patterns" value="baseline and differential"/>
</dbReference>
<dbReference type="GO" id="GO:0005737">
    <property type="term" value="C:cytoplasm"/>
    <property type="evidence" value="ECO:0000314"/>
    <property type="project" value="UniProtKB"/>
</dbReference>
<dbReference type="GO" id="GO:0016787">
    <property type="term" value="F:hydrolase activity"/>
    <property type="evidence" value="ECO:0007669"/>
    <property type="project" value="UniProtKB-KW"/>
</dbReference>
<dbReference type="GO" id="GO:0008270">
    <property type="term" value="F:zinc ion binding"/>
    <property type="evidence" value="ECO:0007669"/>
    <property type="project" value="InterPro"/>
</dbReference>
<dbReference type="GO" id="GO:0051607">
    <property type="term" value="P:defense response to virus"/>
    <property type="evidence" value="ECO:0007669"/>
    <property type="project" value="UniProtKB-KW"/>
</dbReference>
<dbReference type="GO" id="GO:0002244">
    <property type="term" value="P:hematopoietic progenitor cell differentiation"/>
    <property type="evidence" value="ECO:0000316"/>
    <property type="project" value="MGI"/>
</dbReference>
<dbReference type="GO" id="GO:0045087">
    <property type="term" value="P:innate immune response"/>
    <property type="evidence" value="ECO:0007669"/>
    <property type="project" value="UniProtKB-KW"/>
</dbReference>
<dbReference type="GO" id="GO:0045071">
    <property type="term" value="P:negative regulation of viral genome replication"/>
    <property type="evidence" value="ECO:0000314"/>
    <property type="project" value="UniProtKB"/>
</dbReference>
<dbReference type="GO" id="GO:0050688">
    <property type="term" value="P:regulation of defense response to virus"/>
    <property type="evidence" value="ECO:0000315"/>
    <property type="project" value="MGI"/>
</dbReference>
<dbReference type="GO" id="GO:1903900">
    <property type="term" value="P:regulation of viral life cycle"/>
    <property type="evidence" value="ECO:0000315"/>
    <property type="project" value="MGI"/>
</dbReference>
<dbReference type="GO" id="GO:0010526">
    <property type="term" value="P:transposable element silencing"/>
    <property type="evidence" value="ECO:0000314"/>
    <property type="project" value="UniProtKB"/>
</dbReference>
<dbReference type="CDD" id="cd01283">
    <property type="entry name" value="cytidine_deaminase"/>
    <property type="match status" value="2"/>
</dbReference>
<dbReference type="FunFam" id="3.40.140.10:FF:000079">
    <property type="entry name" value="DNA dC-&gt;dU-editing enzyme APOBEC-3"/>
    <property type="match status" value="1"/>
</dbReference>
<dbReference type="FunFam" id="3.40.140.10:FF:000029">
    <property type="entry name" value="DNA dC-&gt;dU-editing enzyme APOBEC-3G"/>
    <property type="match status" value="1"/>
</dbReference>
<dbReference type="Gene3D" id="3.40.140.10">
    <property type="entry name" value="Cytidine Deaminase, domain 2"/>
    <property type="match status" value="2"/>
</dbReference>
<dbReference type="InterPro" id="IPR016192">
    <property type="entry name" value="APOBEC/CMP_deaminase_Zn-bd"/>
</dbReference>
<dbReference type="InterPro" id="IPR050610">
    <property type="entry name" value="APOBEC_Cyt_Deaminase"/>
</dbReference>
<dbReference type="InterPro" id="IPR002125">
    <property type="entry name" value="CMP_dCMP_dom"/>
</dbReference>
<dbReference type="InterPro" id="IPR016193">
    <property type="entry name" value="Cytidine_deaminase-like"/>
</dbReference>
<dbReference type="PANTHER" id="PTHR13857:SF43">
    <property type="entry name" value="DNA DC-DU-EDITING ENZYME APOBEC-3H"/>
    <property type="match status" value="1"/>
</dbReference>
<dbReference type="PANTHER" id="PTHR13857">
    <property type="entry name" value="MRNA EDITING ENZYME"/>
    <property type="match status" value="1"/>
</dbReference>
<dbReference type="Pfam" id="PF18772">
    <property type="entry name" value="APOBEC2"/>
    <property type="match status" value="1"/>
</dbReference>
<dbReference type="Pfam" id="PF18782">
    <property type="entry name" value="NAD2"/>
    <property type="match status" value="1"/>
</dbReference>
<dbReference type="SUPFAM" id="SSF53927">
    <property type="entry name" value="Cytidine deaminase-like"/>
    <property type="match status" value="2"/>
</dbReference>
<dbReference type="PROSITE" id="PS00903">
    <property type="entry name" value="CYT_DCMP_DEAMINASES_1"/>
    <property type="match status" value="2"/>
</dbReference>
<dbReference type="PROSITE" id="PS51747">
    <property type="entry name" value="CYT_DCMP_DEAMINASES_2"/>
    <property type="match status" value="2"/>
</dbReference>